<keyword id="KW-0378">Hydrolase</keyword>
<keyword id="KW-0460">Magnesium</keyword>
<keyword id="KW-0464">Manganese</keyword>
<keyword id="KW-0479">Metal-binding</keyword>
<reference key="1">
    <citation type="journal article" date="2009" name="PLoS ONE">
        <title>Salmonella paratyphi C: genetic divergence from Salmonella choleraesuis and pathogenic convergence with Salmonella typhi.</title>
        <authorList>
            <person name="Liu W.-Q."/>
            <person name="Feng Y."/>
            <person name="Wang Y."/>
            <person name="Zou Q.-H."/>
            <person name="Chen F."/>
            <person name="Guo J.-T."/>
            <person name="Peng Y.-H."/>
            <person name="Jin Y."/>
            <person name="Li Y.-G."/>
            <person name="Hu S.-N."/>
            <person name="Johnston R.N."/>
            <person name="Liu G.-R."/>
            <person name="Liu S.-L."/>
        </authorList>
    </citation>
    <scope>NUCLEOTIDE SEQUENCE [LARGE SCALE GENOMIC DNA]</scope>
    <source>
        <strain>RKS4594</strain>
    </source>
</reference>
<comment type="function">
    <text evidence="1">Probably mediates the hydrolysis of some nucleoside diphosphate derivatives.</text>
</comment>
<comment type="cofactor">
    <cofactor evidence="1">
        <name>Mn(2+)</name>
        <dbReference type="ChEBI" id="CHEBI:29035"/>
    </cofactor>
    <cofactor evidence="1">
        <name>Mg(2+)</name>
        <dbReference type="ChEBI" id="CHEBI:18420"/>
    </cofactor>
</comment>
<comment type="similarity">
    <text evidence="1">Belongs to the Nudix hydrolase family. PCD1 subfamily.</text>
</comment>
<protein>
    <recommendedName>
        <fullName evidence="1">Uncharacterized Nudix hydrolase NudL</fullName>
        <ecNumber evidence="1">3.6.1.-</ecNumber>
    </recommendedName>
</protein>
<sequence>MDTSRLTLDHFLSRFQLLRPQMTHETLNQRQAAVLIPVVRRPQPGLLLTQRAIHLRKHAGQVAFPGGAVDSTDASLIAAALREAQEEVAIPPQAVEVIGVLPPVDSVTGFQVTPVVGIIPPNLPWRASEDEVSAVFEMPLAQALQLGRYHPLDVYRRGNSHRVWLSWYEHYFVWGMTANILRELALQIGVKP</sequence>
<feature type="chain" id="PRO_1000185705" description="Uncharacterized Nudix hydrolase NudL">
    <location>
        <begin position="1"/>
        <end position="192"/>
    </location>
</feature>
<feature type="domain" description="Nudix hydrolase" evidence="1">
    <location>
        <begin position="29"/>
        <end position="160"/>
    </location>
</feature>
<feature type="short sequence motif" description="Nudix box">
    <location>
        <begin position="67"/>
        <end position="89"/>
    </location>
</feature>
<feature type="binding site" evidence="1">
    <location>
        <position position="83"/>
    </location>
    <ligand>
        <name>Mg(2+)</name>
        <dbReference type="ChEBI" id="CHEBI:18420"/>
    </ligand>
</feature>
<feature type="binding site" evidence="1">
    <location>
        <position position="87"/>
    </location>
    <ligand>
        <name>Mg(2+)</name>
        <dbReference type="ChEBI" id="CHEBI:18420"/>
    </ligand>
</feature>
<proteinExistence type="inferred from homology"/>
<accession>C0Q309</accession>
<name>NUDL_SALPC</name>
<dbReference type="EC" id="3.6.1.-" evidence="1"/>
<dbReference type="EMBL" id="CP000857">
    <property type="protein sequence ID" value="ACN46041.1"/>
    <property type="molecule type" value="Genomic_DNA"/>
</dbReference>
<dbReference type="RefSeq" id="WP_000381544.1">
    <property type="nucleotide sequence ID" value="NC_012125.1"/>
</dbReference>
<dbReference type="SMR" id="C0Q309"/>
<dbReference type="KEGG" id="sei:SPC_1904"/>
<dbReference type="HOGENOM" id="CLU_040940_5_2_6"/>
<dbReference type="Proteomes" id="UP000001599">
    <property type="component" value="Chromosome"/>
</dbReference>
<dbReference type="GO" id="GO:0010945">
    <property type="term" value="F:coenzyme A diphosphatase activity"/>
    <property type="evidence" value="ECO:0007669"/>
    <property type="project" value="InterPro"/>
</dbReference>
<dbReference type="GO" id="GO:0000287">
    <property type="term" value="F:magnesium ion binding"/>
    <property type="evidence" value="ECO:0007669"/>
    <property type="project" value="UniProtKB-UniRule"/>
</dbReference>
<dbReference type="GO" id="GO:0030145">
    <property type="term" value="F:manganese ion binding"/>
    <property type="evidence" value="ECO:0007669"/>
    <property type="project" value="UniProtKB-UniRule"/>
</dbReference>
<dbReference type="GO" id="GO:0009132">
    <property type="term" value="P:nucleoside diphosphate metabolic process"/>
    <property type="evidence" value="ECO:0007669"/>
    <property type="project" value="InterPro"/>
</dbReference>
<dbReference type="CDD" id="cd03426">
    <property type="entry name" value="NUDIX_CoAse_Nudt7"/>
    <property type="match status" value="1"/>
</dbReference>
<dbReference type="Gene3D" id="3.90.79.10">
    <property type="entry name" value="Nucleoside Triphosphate Pyrophosphohydrolase"/>
    <property type="match status" value="1"/>
</dbReference>
<dbReference type="HAMAP" id="MF_01592">
    <property type="entry name" value="Nudix_NudL"/>
    <property type="match status" value="1"/>
</dbReference>
<dbReference type="InterPro" id="IPR045121">
    <property type="entry name" value="CoAse"/>
</dbReference>
<dbReference type="InterPro" id="IPR015797">
    <property type="entry name" value="NUDIX_hydrolase-like_dom_sf"/>
</dbReference>
<dbReference type="InterPro" id="IPR000086">
    <property type="entry name" value="NUDIX_hydrolase_dom"/>
</dbReference>
<dbReference type="InterPro" id="IPR000059">
    <property type="entry name" value="NUDIX_hydrolase_NudL_CS"/>
</dbReference>
<dbReference type="InterPro" id="IPR023735">
    <property type="entry name" value="Nudix_NudL"/>
</dbReference>
<dbReference type="NCBIfam" id="NF007980">
    <property type="entry name" value="PRK10707.1"/>
    <property type="match status" value="1"/>
</dbReference>
<dbReference type="PANTHER" id="PTHR12992:SF11">
    <property type="entry name" value="MITOCHONDRIAL COENZYME A DIPHOSPHATASE NUDT8"/>
    <property type="match status" value="1"/>
</dbReference>
<dbReference type="PANTHER" id="PTHR12992">
    <property type="entry name" value="NUDIX HYDROLASE"/>
    <property type="match status" value="1"/>
</dbReference>
<dbReference type="Pfam" id="PF00293">
    <property type="entry name" value="NUDIX"/>
    <property type="match status" value="1"/>
</dbReference>
<dbReference type="SUPFAM" id="SSF55811">
    <property type="entry name" value="Nudix"/>
    <property type="match status" value="1"/>
</dbReference>
<dbReference type="PROSITE" id="PS51462">
    <property type="entry name" value="NUDIX"/>
    <property type="match status" value="1"/>
</dbReference>
<dbReference type="PROSITE" id="PS01293">
    <property type="entry name" value="NUDIX_COA"/>
    <property type="match status" value="1"/>
</dbReference>
<gene>
    <name evidence="1" type="primary">nudL</name>
    <name type="ordered locus">SPC_1904</name>
</gene>
<evidence type="ECO:0000255" key="1">
    <source>
        <dbReference type="HAMAP-Rule" id="MF_01592"/>
    </source>
</evidence>
<organism>
    <name type="scientific">Salmonella paratyphi C (strain RKS4594)</name>
    <dbReference type="NCBI Taxonomy" id="476213"/>
    <lineage>
        <taxon>Bacteria</taxon>
        <taxon>Pseudomonadati</taxon>
        <taxon>Pseudomonadota</taxon>
        <taxon>Gammaproteobacteria</taxon>
        <taxon>Enterobacterales</taxon>
        <taxon>Enterobacteriaceae</taxon>
        <taxon>Salmonella</taxon>
    </lineage>
</organism>